<comment type="function">
    <text evidence="1">Catalyzes the hydrolysis of glutamine to glutamate and ammonia as part of the biosynthesis of pyridoxal 5'-phosphate. The resulting ammonia molecule is channeled to the active site of PdxS.</text>
</comment>
<comment type="catalytic activity">
    <reaction evidence="1">
        <text>aldehydo-D-ribose 5-phosphate + D-glyceraldehyde 3-phosphate + L-glutamine = pyridoxal 5'-phosphate + L-glutamate + phosphate + 3 H2O + H(+)</text>
        <dbReference type="Rhea" id="RHEA:31507"/>
        <dbReference type="ChEBI" id="CHEBI:15377"/>
        <dbReference type="ChEBI" id="CHEBI:15378"/>
        <dbReference type="ChEBI" id="CHEBI:29985"/>
        <dbReference type="ChEBI" id="CHEBI:43474"/>
        <dbReference type="ChEBI" id="CHEBI:58273"/>
        <dbReference type="ChEBI" id="CHEBI:58359"/>
        <dbReference type="ChEBI" id="CHEBI:59776"/>
        <dbReference type="ChEBI" id="CHEBI:597326"/>
        <dbReference type="EC" id="4.3.3.6"/>
    </reaction>
</comment>
<comment type="catalytic activity">
    <reaction evidence="1">
        <text>L-glutamine + H2O = L-glutamate + NH4(+)</text>
        <dbReference type="Rhea" id="RHEA:15889"/>
        <dbReference type="ChEBI" id="CHEBI:15377"/>
        <dbReference type="ChEBI" id="CHEBI:28938"/>
        <dbReference type="ChEBI" id="CHEBI:29985"/>
        <dbReference type="ChEBI" id="CHEBI:58359"/>
        <dbReference type="EC" id="3.5.1.2"/>
    </reaction>
</comment>
<comment type="pathway">
    <text evidence="1">Cofactor biosynthesis; pyridoxal 5'-phosphate biosynthesis.</text>
</comment>
<comment type="subunit">
    <text evidence="1">In the presence of PdxS, forms a dodecamer of heterodimers. Only shows activity in the heterodimer.</text>
</comment>
<comment type="similarity">
    <text evidence="1">Belongs to the glutaminase PdxT/SNO family.</text>
</comment>
<feature type="chain" id="PRO_1000215718" description="Pyridoxal 5'-phosphate synthase subunit PdxT">
    <location>
        <begin position="1"/>
        <end position="195"/>
    </location>
</feature>
<feature type="active site" description="Nucleophile" evidence="1">
    <location>
        <position position="84"/>
    </location>
</feature>
<feature type="active site" description="Charge relay system" evidence="1">
    <location>
        <position position="175"/>
    </location>
</feature>
<feature type="active site" description="Charge relay system" evidence="1">
    <location>
        <position position="177"/>
    </location>
</feature>
<feature type="binding site" evidence="1">
    <location>
        <begin position="55"/>
        <end position="57"/>
    </location>
    <ligand>
        <name>L-glutamine</name>
        <dbReference type="ChEBI" id="CHEBI:58359"/>
    </ligand>
</feature>
<feature type="binding site" evidence="1">
    <location>
        <position position="111"/>
    </location>
    <ligand>
        <name>L-glutamine</name>
        <dbReference type="ChEBI" id="CHEBI:58359"/>
    </ligand>
</feature>
<feature type="binding site" evidence="1">
    <location>
        <begin position="139"/>
        <end position="140"/>
    </location>
    <ligand>
        <name>L-glutamine</name>
        <dbReference type="ChEBI" id="CHEBI:58359"/>
    </ligand>
</feature>
<name>PDXT_METPE</name>
<reference key="1">
    <citation type="journal article" date="2015" name="Genome Announc.">
        <title>Complete Genome Sequence of Methanosphaerula palustris E1-9CT, a Hydrogenotrophic Methanogen Isolated from a Minerotrophic Fen Peatland.</title>
        <authorList>
            <person name="Cadillo-Quiroz H."/>
            <person name="Browne P."/>
            <person name="Kyrpides N."/>
            <person name="Woyke T."/>
            <person name="Goodwin L."/>
            <person name="Detter C."/>
            <person name="Yavitt J.B."/>
            <person name="Zinder S.H."/>
        </authorList>
    </citation>
    <scope>NUCLEOTIDE SEQUENCE [LARGE SCALE GENOMIC DNA]</scope>
    <source>
        <strain>ATCC BAA-1556 / DSM 19958 / E1-9c</strain>
    </source>
</reference>
<keyword id="KW-0315">Glutamine amidotransferase</keyword>
<keyword id="KW-0378">Hydrolase</keyword>
<keyword id="KW-0456">Lyase</keyword>
<keyword id="KW-0663">Pyridoxal phosphate</keyword>
<keyword id="KW-1185">Reference proteome</keyword>
<dbReference type="EC" id="4.3.3.6" evidence="1"/>
<dbReference type="EC" id="3.5.1.2" evidence="1"/>
<dbReference type="EMBL" id="CP001338">
    <property type="protein sequence ID" value="ACL17520.1"/>
    <property type="molecule type" value="Genomic_DNA"/>
</dbReference>
<dbReference type="RefSeq" id="WP_012618839.1">
    <property type="nucleotide sequence ID" value="NC_011832.1"/>
</dbReference>
<dbReference type="SMR" id="B8GE19"/>
<dbReference type="STRING" id="521011.Mpal_2227"/>
<dbReference type="MEROPS" id="C26.A32"/>
<dbReference type="GeneID" id="7272524"/>
<dbReference type="KEGG" id="mpl:Mpal_2227"/>
<dbReference type="eggNOG" id="arCOG00034">
    <property type="taxonomic scope" value="Archaea"/>
</dbReference>
<dbReference type="HOGENOM" id="CLU_069674_2_0_2"/>
<dbReference type="OrthoDB" id="26717at2157"/>
<dbReference type="UniPathway" id="UPA00245"/>
<dbReference type="Proteomes" id="UP000002457">
    <property type="component" value="Chromosome"/>
</dbReference>
<dbReference type="GO" id="GO:0005829">
    <property type="term" value="C:cytosol"/>
    <property type="evidence" value="ECO:0007669"/>
    <property type="project" value="TreeGrafter"/>
</dbReference>
<dbReference type="GO" id="GO:1903600">
    <property type="term" value="C:glutaminase complex"/>
    <property type="evidence" value="ECO:0007669"/>
    <property type="project" value="TreeGrafter"/>
</dbReference>
<dbReference type="GO" id="GO:0004359">
    <property type="term" value="F:glutaminase activity"/>
    <property type="evidence" value="ECO:0007669"/>
    <property type="project" value="UniProtKB-UniRule"/>
</dbReference>
<dbReference type="GO" id="GO:0036381">
    <property type="term" value="F:pyridoxal 5'-phosphate synthase (glutamine hydrolysing) activity"/>
    <property type="evidence" value="ECO:0007669"/>
    <property type="project" value="UniProtKB-UniRule"/>
</dbReference>
<dbReference type="GO" id="GO:0006543">
    <property type="term" value="P:glutamine catabolic process"/>
    <property type="evidence" value="ECO:0007669"/>
    <property type="project" value="UniProtKB-UniRule"/>
</dbReference>
<dbReference type="GO" id="GO:0042823">
    <property type="term" value="P:pyridoxal phosphate biosynthetic process"/>
    <property type="evidence" value="ECO:0007669"/>
    <property type="project" value="UniProtKB-UniRule"/>
</dbReference>
<dbReference type="GO" id="GO:0008614">
    <property type="term" value="P:pyridoxine metabolic process"/>
    <property type="evidence" value="ECO:0007669"/>
    <property type="project" value="TreeGrafter"/>
</dbReference>
<dbReference type="CDD" id="cd01749">
    <property type="entry name" value="GATase1_PB"/>
    <property type="match status" value="1"/>
</dbReference>
<dbReference type="FunFam" id="3.40.50.880:FF:000010">
    <property type="entry name" value="uncharacterized protein LOC100176842 isoform X2"/>
    <property type="match status" value="1"/>
</dbReference>
<dbReference type="Gene3D" id="3.40.50.880">
    <property type="match status" value="1"/>
</dbReference>
<dbReference type="HAMAP" id="MF_01615">
    <property type="entry name" value="PdxT"/>
    <property type="match status" value="1"/>
</dbReference>
<dbReference type="InterPro" id="IPR029062">
    <property type="entry name" value="Class_I_gatase-like"/>
</dbReference>
<dbReference type="InterPro" id="IPR002161">
    <property type="entry name" value="PdxT/SNO"/>
</dbReference>
<dbReference type="InterPro" id="IPR021196">
    <property type="entry name" value="PdxT/SNO_CS"/>
</dbReference>
<dbReference type="NCBIfam" id="TIGR03800">
    <property type="entry name" value="PLP_synth_Pdx2"/>
    <property type="match status" value="1"/>
</dbReference>
<dbReference type="PANTHER" id="PTHR31559">
    <property type="entry name" value="PYRIDOXAL 5'-PHOSPHATE SYNTHASE SUBUNIT SNO"/>
    <property type="match status" value="1"/>
</dbReference>
<dbReference type="PANTHER" id="PTHR31559:SF0">
    <property type="entry name" value="PYRIDOXAL 5'-PHOSPHATE SYNTHASE SUBUNIT SNO1-RELATED"/>
    <property type="match status" value="1"/>
</dbReference>
<dbReference type="Pfam" id="PF01174">
    <property type="entry name" value="SNO"/>
    <property type="match status" value="1"/>
</dbReference>
<dbReference type="PIRSF" id="PIRSF005639">
    <property type="entry name" value="Glut_amidoT_SNO"/>
    <property type="match status" value="1"/>
</dbReference>
<dbReference type="SUPFAM" id="SSF52317">
    <property type="entry name" value="Class I glutamine amidotransferase-like"/>
    <property type="match status" value="1"/>
</dbReference>
<dbReference type="PROSITE" id="PS01236">
    <property type="entry name" value="PDXT_SNO_1"/>
    <property type="match status" value="1"/>
</dbReference>
<dbReference type="PROSITE" id="PS51130">
    <property type="entry name" value="PDXT_SNO_2"/>
    <property type="match status" value="1"/>
</dbReference>
<accession>B8GE19</accession>
<sequence>MDVKIGVLALQGDVAEHITAFQQVLDTIPSVVGSVVEVREAAQIPSLDAIAIPGGESTTISRLIEKNRMHEVLTGFQGGIFATCAGMVLMAKSVEDPRICPLGLIDMEVDRNAFGRQRESFEADIPVQGLDAPFHAVFIRAPVVRSVGAEATVLATIDQGIVAVLQGKHMALSFHPELAGDLRLHRLFLTGLGIV</sequence>
<evidence type="ECO:0000255" key="1">
    <source>
        <dbReference type="HAMAP-Rule" id="MF_01615"/>
    </source>
</evidence>
<gene>
    <name evidence="1" type="primary">pdxT</name>
    <name type="ordered locus">Mpal_2227</name>
</gene>
<organism>
    <name type="scientific">Methanosphaerula palustris (strain ATCC BAA-1556 / DSM 19958 / E1-9c)</name>
    <dbReference type="NCBI Taxonomy" id="521011"/>
    <lineage>
        <taxon>Archaea</taxon>
        <taxon>Methanobacteriati</taxon>
        <taxon>Methanobacteriota</taxon>
        <taxon>Stenosarchaea group</taxon>
        <taxon>Methanomicrobia</taxon>
        <taxon>Methanomicrobiales</taxon>
        <taxon>Methanoregulaceae</taxon>
        <taxon>Methanosphaerula</taxon>
    </lineage>
</organism>
<proteinExistence type="inferred from homology"/>
<protein>
    <recommendedName>
        <fullName evidence="1">Pyridoxal 5'-phosphate synthase subunit PdxT</fullName>
        <ecNumber evidence="1">4.3.3.6</ecNumber>
    </recommendedName>
    <alternativeName>
        <fullName evidence="1">Pdx2</fullName>
    </alternativeName>
    <alternativeName>
        <fullName evidence="1">Pyridoxal 5'-phosphate synthase glutaminase subunit</fullName>
        <ecNumber evidence="1">3.5.1.2</ecNumber>
    </alternativeName>
</protein>